<protein>
    <recommendedName>
        <fullName evidence="1">1-(5-phosphoribosyl)-5-[(5-phosphoribosylamino)methylideneamino] imidazole-4-carboxamide isomerase</fullName>
        <ecNumber evidence="1">5.3.1.16</ecNumber>
    </recommendedName>
    <alternativeName>
        <fullName evidence="1">Phosphoribosylformimino-5-aminoimidazole carboxamide ribotide isomerase</fullName>
    </alternativeName>
</protein>
<proteinExistence type="inferred from homology"/>
<dbReference type="EC" id="5.3.1.16" evidence="1"/>
<dbReference type="EMBL" id="AM920689">
    <property type="protein sequence ID" value="CAP51453.1"/>
    <property type="molecule type" value="Genomic_DNA"/>
</dbReference>
<dbReference type="SMR" id="B0RSL8"/>
<dbReference type="KEGG" id="xca:xcc-b100_2100"/>
<dbReference type="HOGENOM" id="CLU_048577_1_2_6"/>
<dbReference type="UniPathway" id="UPA00031">
    <property type="reaction ID" value="UER00009"/>
</dbReference>
<dbReference type="Proteomes" id="UP000001188">
    <property type="component" value="Chromosome"/>
</dbReference>
<dbReference type="GO" id="GO:0005737">
    <property type="term" value="C:cytoplasm"/>
    <property type="evidence" value="ECO:0007669"/>
    <property type="project" value="UniProtKB-SubCell"/>
</dbReference>
<dbReference type="GO" id="GO:0003949">
    <property type="term" value="F:1-(5-phosphoribosyl)-5-[(5-phosphoribosylamino)methylideneamino]imidazole-4-carboxamide isomerase activity"/>
    <property type="evidence" value="ECO:0007669"/>
    <property type="project" value="UniProtKB-UniRule"/>
</dbReference>
<dbReference type="GO" id="GO:0000105">
    <property type="term" value="P:L-histidine biosynthetic process"/>
    <property type="evidence" value="ECO:0007669"/>
    <property type="project" value="UniProtKB-UniRule"/>
</dbReference>
<dbReference type="GO" id="GO:0000162">
    <property type="term" value="P:L-tryptophan biosynthetic process"/>
    <property type="evidence" value="ECO:0007669"/>
    <property type="project" value="TreeGrafter"/>
</dbReference>
<dbReference type="CDD" id="cd04732">
    <property type="entry name" value="HisA"/>
    <property type="match status" value="1"/>
</dbReference>
<dbReference type="FunFam" id="3.20.20.70:FF:000009">
    <property type="entry name" value="1-(5-phosphoribosyl)-5-[(5-phosphoribosylamino)methylideneamino] imidazole-4-carboxamide isomerase"/>
    <property type="match status" value="1"/>
</dbReference>
<dbReference type="Gene3D" id="3.20.20.70">
    <property type="entry name" value="Aldolase class I"/>
    <property type="match status" value="1"/>
</dbReference>
<dbReference type="HAMAP" id="MF_01014">
    <property type="entry name" value="HisA"/>
    <property type="match status" value="1"/>
</dbReference>
<dbReference type="InterPro" id="IPR013785">
    <property type="entry name" value="Aldolase_TIM"/>
</dbReference>
<dbReference type="InterPro" id="IPR006062">
    <property type="entry name" value="His_biosynth"/>
</dbReference>
<dbReference type="InterPro" id="IPR006063">
    <property type="entry name" value="HisA_bact_arch"/>
</dbReference>
<dbReference type="InterPro" id="IPR044524">
    <property type="entry name" value="Isoase_HisA-like"/>
</dbReference>
<dbReference type="InterPro" id="IPR023016">
    <property type="entry name" value="Isoase_HisA-like_bact"/>
</dbReference>
<dbReference type="InterPro" id="IPR011060">
    <property type="entry name" value="RibuloseP-bd_barrel"/>
</dbReference>
<dbReference type="NCBIfam" id="TIGR00007">
    <property type="entry name" value="1-(5-phosphoribosyl)-5-[(5-phosphoribosylamino)methylideneamino]imidazole-4-carboxamide isomerase"/>
    <property type="match status" value="1"/>
</dbReference>
<dbReference type="PANTHER" id="PTHR43090">
    <property type="entry name" value="1-(5-PHOSPHORIBOSYL)-5-[(5-PHOSPHORIBOSYLAMINO)METHYLIDENEAMINO] IMIDAZOLE-4-CARBOXAMIDE ISOMERASE"/>
    <property type="match status" value="1"/>
</dbReference>
<dbReference type="PANTHER" id="PTHR43090:SF2">
    <property type="entry name" value="1-(5-PHOSPHORIBOSYL)-5-[(5-PHOSPHORIBOSYLAMINO)METHYLIDENEAMINO] IMIDAZOLE-4-CARBOXAMIDE ISOMERASE"/>
    <property type="match status" value="1"/>
</dbReference>
<dbReference type="Pfam" id="PF00977">
    <property type="entry name" value="His_biosynth"/>
    <property type="match status" value="1"/>
</dbReference>
<dbReference type="SUPFAM" id="SSF51366">
    <property type="entry name" value="Ribulose-phoshate binding barrel"/>
    <property type="match status" value="1"/>
</dbReference>
<gene>
    <name evidence="1" type="primary">hisA</name>
    <name type="ordered locus">xcc-b100_2100</name>
</gene>
<accession>B0RSL8</accession>
<name>HIS4_XANCB</name>
<organism>
    <name type="scientific">Xanthomonas campestris pv. campestris (strain B100)</name>
    <dbReference type="NCBI Taxonomy" id="509169"/>
    <lineage>
        <taxon>Bacteria</taxon>
        <taxon>Pseudomonadati</taxon>
        <taxon>Pseudomonadota</taxon>
        <taxon>Gammaproteobacteria</taxon>
        <taxon>Lysobacterales</taxon>
        <taxon>Lysobacteraceae</taxon>
        <taxon>Xanthomonas</taxon>
    </lineage>
</organism>
<comment type="catalytic activity">
    <reaction evidence="1">
        <text>1-(5-phospho-beta-D-ribosyl)-5-[(5-phospho-beta-D-ribosylamino)methylideneamino]imidazole-4-carboxamide = 5-[(5-phospho-1-deoxy-D-ribulos-1-ylimino)methylamino]-1-(5-phospho-beta-D-ribosyl)imidazole-4-carboxamide</text>
        <dbReference type="Rhea" id="RHEA:15469"/>
        <dbReference type="ChEBI" id="CHEBI:58435"/>
        <dbReference type="ChEBI" id="CHEBI:58525"/>
        <dbReference type="EC" id="5.3.1.16"/>
    </reaction>
</comment>
<comment type="pathway">
    <text evidence="1">Amino-acid biosynthesis; L-histidine biosynthesis; L-histidine from 5-phospho-alpha-D-ribose 1-diphosphate: step 4/9.</text>
</comment>
<comment type="subcellular location">
    <subcellularLocation>
        <location evidence="1">Cytoplasm</location>
    </subcellularLocation>
</comment>
<comment type="similarity">
    <text evidence="1">Belongs to the HisA/HisF family.</text>
</comment>
<feature type="chain" id="PRO_1000190570" description="1-(5-phosphoribosyl)-5-[(5-phosphoribosylamino)methylideneamino] imidazole-4-carboxamide isomerase">
    <location>
        <begin position="1"/>
        <end position="244"/>
    </location>
</feature>
<feature type="active site" description="Proton acceptor" evidence="1">
    <location>
        <position position="10"/>
    </location>
</feature>
<feature type="active site" description="Proton donor" evidence="1">
    <location>
        <position position="132"/>
    </location>
</feature>
<reference key="1">
    <citation type="journal article" date="2008" name="J. Biotechnol.">
        <title>The genome of Xanthomonas campestris pv. campestris B100 and its use for the reconstruction of metabolic pathways involved in xanthan biosynthesis.</title>
        <authorList>
            <person name="Vorhoelter F.-J."/>
            <person name="Schneiker S."/>
            <person name="Goesmann A."/>
            <person name="Krause L."/>
            <person name="Bekel T."/>
            <person name="Kaiser O."/>
            <person name="Linke B."/>
            <person name="Patschkowski T."/>
            <person name="Rueckert C."/>
            <person name="Schmid J."/>
            <person name="Sidhu V.K."/>
            <person name="Sieber V."/>
            <person name="Tauch A."/>
            <person name="Watt S.A."/>
            <person name="Weisshaar B."/>
            <person name="Becker A."/>
            <person name="Niehaus K."/>
            <person name="Puehler A."/>
        </authorList>
    </citation>
    <scope>NUCLEOTIDE SEQUENCE [LARGE SCALE GENOMIC DNA]</scope>
    <source>
        <strain>B100</strain>
    </source>
</reference>
<sequence>MSFTVYPALDIRDGRVVRLLQGDYARETRYGDDVLPRAQAFADAGAQWMHLVDLDAAKAGGYTLAALLGQISRQTGLQVQTGGGVRSREDVARILDAGAARVVVGSLAVRDSATVIGWLQEFGTDRLTIALDTRQDAAGVWQLPVHGWTETAEATLDQLATQYAQAGLQHLLCTDIARDGMLSGPNMGLYAHLRALAPQLQVQVSGGARNLADVAAAKAAGCAGIVLGKALLEGHLDLKDALAC</sequence>
<evidence type="ECO:0000255" key="1">
    <source>
        <dbReference type="HAMAP-Rule" id="MF_01014"/>
    </source>
</evidence>
<keyword id="KW-0028">Amino-acid biosynthesis</keyword>
<keyword id="KW-0963">Cytoplasm</keyword>
<keyword id="KW-0368">Histidine biosynthesis</keyword>
<keyword id="KW-0413">Isomerase</keyword>